<sequence>MSLADSVLAINNDLPIRTDSPVHSGKVRSVYWLTDADSRRLITTKGYNVPEDTPLAIMVISDRISAFDCIFHGEGGLKGIPGKGAALNAISNHWFKLFAENGLADSHILDIPHPFVWIVQKARPIKVEAICRQYITGSMWRAYSKGERVFCGITLPEGLEKDQKLPELLITPSTKGILTGIPGVPAQDDVNISRSDIEANYQAFGFEQLADIDLYEKLLKDGFKVISAALAKLDQVFVDTKFEFGYVTDKDGNSKLIYMDEVGTPDSSRIWDGAAYRDGKILENSKEGFRQFLLNHFPDPDVLLNKDRMPEREALARDNDLPLEAMMQVSRTYTGVAEKVTGAPIPLPANPKADIIKILREEYDLIV</sequence>
<reference key="1">
    <citation type="submission" date="2007-11" db="EMBL/GenBank/DDBJ databases">
        <title>Complete sequence of chromosome of Shewanella baltica OS195.</title>
        <authorList>
            <consortium name="US DOE Joint Genome Institute"/>
            <person name="Copeland A."/>
            <person name="Lucas S."/>
            <person name="Lapidus A."/>
            <person name="Barry K."/>
            <person name="Glavina del Rio T."/>
            <person name="Dalin E."/>
            <person name="Tice H."/>
            <person name="Pitluck S."/>
            <person name="Chain P."/>
            <person name="Malfatti S."/>
            <person name="Shin M."/>
            <person name="Vergez L."/>
            <person name="Schmutz J."/>
            <person name="Larimer F."/>
            <person name="Land M."/>
            <person name="Hauser L."/>
            <person name="Kyrpides N."/>
            <person name="Kim E."/>
            <person name="Brettar I."/>
            <person name="Rodrigues J."/>
            <person name="Konstantinidis K."/>
            <person name="Klappenbach J."/>
            <person name="Hofle M."/>
            <person name="Tiedje J."/>
            <person name="Richardson P."/>
        </authorList>
    </citation>
    <scope>NUCLEOTIDE SEQUENCE [LARGE SCALE GENOMIC DNA]</scope>
    <source>
        <strain>OS195</strain>
    </source>
</reference>
<name>PUR7_SHEB9</name>
<organism>
    <name type="scientific">Shewanella baltica (strain OS195)</name>
    <dbReference type="NCBI Taxonomy" id="399599"/>
    <lineage>
        <taxon>Bacteria</taxon>
        <taxon>Pseudomonadati</taxon>
        <taxon>Pseudomonadota</taxon>
        <taxon>Gammaproteobacteria</taxon>
        <taxon>Alteromonadales</taxon>
        <taxon>Shewanellaceae</taxon>
        <taxon>Shewanella</taxon>
    </lineage>
</organism>
<dbReference type="EC" id="6.3.2.6" evidence="1"/>
<dbReference type="EMBL" id="CP000891">
    <property type="protein sequence ID" value="ABX47729.1"/>
    <property type="molecule type" value="Genomic_DNA"/>
</dbReference>
<dbReference type="RefSeq" id="WP_012196607.1">
    <property type="nucleotide sequence ID" value="NC_009997.1"/>
</dbReference>
<dbReference type="SMR" id="A9KZH0"/>
<dbReference type="KEGG" id="sbn:Sbal195_0551"/>
<dbReference type="HOGENOM" id="CLU_064197_0_0_6"/>
<dbReference type="UniPathway" id="UPA00074">
    <property type="reaction ID" value="UER00131"/>
</dbReference>
<dbReference type="Proteomes" id="UP000000770">
    <property type="component" value="Chromosome"/>
</dbReference>
<dbReference type="GO" id="GO:0005737">
    <property type="term" value="C:cytoplasm"/>
    <property type="evidence" value="ECO:0007669"/>
    <property type="project" value="TreeGrafter"/>
</dbReference>
<dbReference type="GO" id="GO:0005524">
    <property type="term" value="F:ATP binding"/>
    <property type="evidence" value="ECO:0007669"/>
    <property type="project" value="UniProtKB-KW"/>
</dbReference>
<dbReference type="GO" id="GO:0004639">
    <property type="term" value="F:phosphoribosylaminoimidazolesuccinocarboxamide synthase activity"/>
    <property type="evidence" value="ECO:0007669"/>
    <property type="project" value="UniProtKB-UniRule"/>
</dbReference>
<dbReference type="GO" id="GO:0006189">
    <property type="term" value="P:'de novo' IMP biosynthetic process"/>
    <property type="evidence" value="ECO:0007669"/>
    <property type="project" value="UniProtKB-UniRule"/>
</dbReference>
<dbReference type="CDD" id="cd01414">
    <property type="entry name" value="SAICAR_synt_Sc"/>
    <property type="match status" value="1"/>
</dbReference>
<dbReference type="FunFam" id="3.30.200.20:FF:000597">
    <property type="entry name" value="Phosphoribosylaminoimidazole-succinocarboxamide synthase"/>
    <property type="match status" value="1"/>
</dbReference>
<dbReference type="FunFam" id="3.30.470.20:FF:000067">
    <property type="entry name" value="Phosphoribosylaminoimidazole-succinocarboxamide synthase"/>
    <property type="match status" value="1"/>
</dbReference>
<dbReference type="Gene3D" id="3.30.470.20">
    <property type="entry name" value="ATP-grasp fold, B domain"/>
    <property type="match status" value="1"/>
</dbReference>
<dbReference type="Gene3D" id="3.30.200.20">
    <property type="entry name" value="Phosphorylase Kinase, domain 1"/>
    <property type="match status" value="1"/>
</dbReference>
<dbReference type="HAMAP" id="MF_00137">
    <property type="entry name" value="SAICAR_synth"/>
    <property type="match status" value="1"/>
</dbReference>
<dbReference type="InterPro" id="IPR028923">
    <property type="entry name" value="SAICAR_synt/ADE2_N"/>
</dbReference>
<dbReference type="InterPro" id="IPR014106">
    <property type="entry name" value="SAICAR_synthase_Vibrio-typ"/>
</dbReference>
<dbReference type="InterPro" id="IPR018236">
    <property type="entry name" value="SAICAR_synthetase_CS"/>
</dbReference>
<dbReference type="NCBIfam" id="NF010567">
    <property type="entry name" value="PRK13960.1"/>
    <property type="match status" value="1"/>
</dbReference>
<dbReference type="NCBIfam" id="TIGR02735">
    <property type="entry name" value="purC_vibrio"/>
    <property type="match status" value="1"/>
</dbReference>
<dbReference type="PANTHER" id="PTHR43700">
    <property type="entry name" value="PHOSPHORIBOSYLAMINOIMIDAZOLE-SUCCINOCARBOXAMIDE SYNTHASE"/>
    <property type="match status" value="1"/>
</dbReference>
<dbReference type="PANTHER" id="PTHR43700:SF1">
    <property type="entry name" value="PHOSPHORIBOSYLAMINOIMIDAZOLE-SUCCINOCARBOXAMIDE SYNTHASE"/>
    <property type="match status" value="1"/>
</dbReference>
<dbReference type="Pfam" id="PF01259">
    <property type="entry name" value="SAICAR_synt"/>
    <property type="match status" value="1"/>
</dbReference>
<dbReference type="SUPFAM" id="SSF56104">
    <property type="entry name" value="SAICAR synthase-like"/>
    <property type="match status" value="1"/>
</dbReference>
<dbReference type="PROSITE" id="PS01057">
    <property type="entry name" value="SAICAR_SYNTHETASE_1"/>
    <property type="match status" value="1"/>
</dbReference>
<protein>
    <recommendedName>
        <fullName evidence="1">Phosphoribosylaminoimidazole-succinocarboxamide synthase</fullName>
        <ecNumber evidence="1">6.3.2.6</ecNumber>
    </recommendedName>
    <alternativeName>
        <fullName evidence="1">SAICAR synthetase</fullName>
    </alternativeName>
</protein>
<gene>
    <name evidence="1" type="primary">purC</name>
    <name type="ordered locus">Sbal195_0551</name>
</gene>
<accession>A9KZH0</accession>
<keyword id="KW-0067">ATP-binding</keyword>
<keyword id="KW-0436">Ligase</keyword>
<keyword id="KW-0547">Nucleotide-binding</keyword>
<keyword id="KW-0658">Purine biosynthesis</keyword>
<evidence type="ECO:0000255" key="1">
    <source>
        <dbReference type="HAMAP-Rule" id="MF_00137"/>
    </source>
</evidence>
<feature type="chain" id="PRO_1000117846" description="Phosphoribosylaminoimidazole-succinocarboxamide synthase">
    <location>
        <begin position="1"/>
        <end position="367"/>
    </location>
</feature>
<proteinExistence type="inferred from homology"/>
<comment type="catalytic activity">
    <reaction evidence="1">
        <text>5-amino-1-(5-phospho-D-ribosyl)imidazole-4-carboxylate + L-aspartate + ATP = (2S)-2-[5-amino-1-(5-phospho-beta-D-ribosyl)imidazole-4-carboxamido]succinate + ADP + phosphate + 2 H(+)</text>
        <dbReference type="Rhea" id="RHEA:22628"/>
        <dbReference type="ChEBI" id="CHEBI:15378"/>
        <dbReference type="ChEBI" id="CHEBI:29991"/>
        <dbReference type="ChEBI" id="CHEBI:30616"/>
        <dbReference type="ChEBI" id="CHEBI:43474"/>
        <dbReference type="ChEBI" id="CHEBI:58443"/>
        <dbReference type="ChEBI" id="CHEBI:77657"/>
        <dbReference type="ChEBI" id="CHEBI:456216"/>
        <dbReference type="EC" id="6.3.2.6"/>
    </reaction>
</comment>
<comment type="pathway">
    <text evidence="1">Purine metabolism; IMP biosynthesis via de novo pathway; 5-amino-1-(5-phospho-D-ribosyl)imidazole-4-carboxamide from 5-amino-1-(5-phospho-D-ribosyl)imidazole-4-carboxylate: step 1/2.</text>
</comment>
<comment type="similarity">
    <text evidence="1">Belongs to the SAICAR synthetase family.</text>
</comment>